<gene>
    <name type="ORF">OsI_38237</name>
</gene>
<sequence>MENRERAGAGAVGSAGSLGLRVEQAVFSSASLLFMSVGVEFFSYTAFCFLVTIMGLVIPWSCTLAMIDVYSILVGCPLRVPGVMVIVVIGDWVLAILSLAAASSSAAVIDLLLQFHGSHCSPRFCGRYQLSAMMAFLSWFLTAASSLFNLWFIASR</sequence>
<evidence type="ECO:0000250" key="1"/>
<evidence type="ECO:0000255" key="2"/>
<evidence type="ECO:0000305" key="3"/>
<name>CSPLU_ORYSI</name>
<feature type="chain" id="PRO_0000418696" description="CASP-like protein 5C1">
    <location>
        <begin position="1"/>
        <end position="156"/>
    </location>
</feature>
<feature type="topological domain" description="Cytoplasmic" evidence="2">
    <location>
        <begin position="1"/>
        <end position="24"/>
    </location>
</feature>
<feature type="transmembrane region" description="Helical" evidence="2">
    <location>
        <begin position="25"/>
        <end position="45"/>
    </location>
</feature>
<feature type="topological domain" description="Extracellular" evidence="2">
    <location>
        <position position="46"/>
    </location>
</feature>
<feature type="transmembrane region" description="Helical" evidence="2">
    <location>
        <begin position="47"/>
        <end position="67"/>
    </location>
</feature>
<feature type="topological domain" description="Cytoplasmic" evidence="2">
    <location>
        <begin position="68"/>
        <end position="81"/>
    </location>
</feature>
<feature type="transmembrane region" description="Helical" evidence="2">
    <location>
        <begin position="82"/>
        <end position="102"/>
    </location>
</feature>
<feature type="topological domain" description="Extracellular" evidence="2">
    <location>
        <begin position="103"/>
        <end position="132"/>
    </location>
</feature>
<feature type="transmembrane region" description="Helical" evidence="2">
    <location>
        <begin position="133"/>
        <end position="153"/>
    </location>
</feature>
<feature type="topological domain" description="Cytoplasmic" evidence="2">
    <location>
        <begin position="154"/>
        <end position="156"/>
    </location>
</feature>
<feature type="sequence conflict" description="In Ref. 2; CT843534." evidence="3" ref="2">
    <original>E</original>
    <variation>G</variation>
    <location>
        <position position="23"/>
    </location>
</feature>
<comment type="subunit">
    <text evidence="1">Homodimer and heterodimers.</text>
</comment>
<comment type="subcellular location">
    <subcellularLocation>
        <location evidence="1">Cell membrane</location>
        <topology evidence="1">Multi-pass membrane protein</topology>
    </subcellularLocation>
</comment>
<comment type="similarity">
    <text evidence="3">Belongs to the Casparian strip membrane proteins (CASP) family.</text>
</comment>
<accession>B8BPI2</accession>
<keyword id="KW-1003">Cell membrane</keyword>
<keyword id="KW-0472">Membrane</keyword>
<keyword id="KW-1185">Reference proteome</keyword>
<keyword id="KW-0812">Transmembrane</keyword>
<keyword id="KW-1133">Transmembrane helix</keyword>
<dbReference type="EMBL" id="CM000137">
    <property type="protein sequence ID" value="EEC69230.1"/>
    <property type="molecule type" value="Genomic_DNA"/>
</dbReference>
<dbReference type="EMBL" id="CT843534">
    <property type="status" value="NOT_ANNOTATED_CDS"/>
    <property type="molecule type" value="mRNA"/>
</dbReference>
<dbReference type="STRING" id="39946.B8BPI2"/>
<dbReference type="EnsemblPlants" id="BGIOSGA037347-TA">
    <property type="protein sequence ID" value="BGIOSGA037347-PA"/>
    <property type="gene ID" value="BGIOSGA037347"/>
</dbReference>
<dbReference type="Gramene" id="BGIOSGA037347-TA">
    <property type="protein sequence ID" value="BGIOSGA037347-PA"/>
    <property type="gene ID" value="BGIOSGA037347"/>
</dbReference>
<dbReference type="HOGENOM" id="CLU_103961_1_0_1"/>
<dbReference type="OMA" id="PKFCGRY"/>
<dbReference type="Proteomes" id="UP000007015">
    <property type="component" value="Chromosome 12"/>
</dbReference>
<dbReference type="GO" id="GO:0005886">
    <property type="term" value="C:plasma membrane"/>
    <property type="evidence" value="ECO:0007669"/>
    <property type="project" value="UniProtKB-SubCell"/>
</dbReference>
<dbReference type="InterPro" id="IPR006702">
    <property type="entry name" value="CASP_dom"/>
</dbReference>
<dbReference type="InterPro" id="IPR045009">
    <property type="entry name" value="CASPL-5"/>
</dbReference>
<dbReference type="PANTHER" id="PTHR32021">
    <property type="entry name" value="CASP-LIKE PROTEIN 5B3"/>
    <property type="match status" value="1"/>
</dbReference>
<dbReference type="PANTHER" id="PTHR32021:SF30">
    <property type="entry name" value="CASP-LIKE PROTEIN 5C1"/>
    <property type="match status" value="1"/>
</dbReference>
<dbReference type="Pfam" id="PF04535">
    <property type="entry name" value="CASP_dom"/>
    <property type="match status" value="1"/>
</dbReference>
<proteinExistence type="evidence at transcript level"/>
<organism>
    <name type="scientific">Oryza sativa subsp. indica</name>
    <name type="common">Rice</name>
    <dbReference type="NCBI Taxonomy" id="39946"/>
    <lineage>
        <taxon>Eukaryota</taxon>
        <taxon>Viridiplantae</taxon>
        <taxon>Streptophyta</taxon>
        <taxon>Embryophyta</taxon>
        <taxon>Tracheophyta</taxon>
        <taxon>Spermatophyta</taxon>
        <taxon>Magnoliopsida</taxon>
        <taxon>Liliopsida</taxon>
        <taxon>Poales</taxon>
        <taxon>Poaceae</taxon>
        <taxon>BOP clade</taxon>
        <taxon>Oryzoideae</taxon>
        <taxon>Oryzeae</taxon>
        <taxon>Oryzinae</taxon>
        <taxon>Oryza</taxon>
        <taxon>Oryza sativa</taxon>
    </lineage>
</organism>
<protein>
    <recommendedName>
        <fullName>CASP-like protein 5C1</fullName>
        <shortName>OsCASPL5C1</shortName>
    </recommendedName>
</protein>
<reference key="1">
    <citation type="journal article" date="2005" name="PLoS Biol.">
        <title>The genomes of Oryza sativa: a history of duplications.</title>
        <authorList>
            <person name="Yu J."/>
            <person name="Wang J."/>
            <person name="Lin W."/>
            <person name="Li S."/>
            <person name="Li H."/>
            <person name="Zhou J."/>
            <person name="Ni P."/>
            <person name="Dong W."/>
            <person name="Hu S."/>
            <person name="Zeng C."/>
            <person name="Zhang J."/>
            <person name="Zhang Y."/>
            <person name="Li R."/>
            <person name="Xu Z."/>
            <person name="Li S."/>
            <person name="Li X."/>
            <person name="Zheng H."/>
            <person name="Cong L."/>
            <person name="Lin L."/>
            <person name="Yin J."/>
            <person name="Geng J."/>
            <person name="Li G."/>
            <person name="Shi J."/>
            <person name="Liu J."/>
            <person name="Lv H."/>
            <person name="Li J."/>
            <person name="Wang J."/>
            <person name="Deng Y."/>
            <person name="Ran L."/>
            <person name="Shi X."/>
            <person name="Wang X."/>
            <person name="Wu Q."/>
            <person name="Li C."/>
            <person name="Ren X."/>
            <person name="Wang J."/>
            <person name="Wang X."/>
            <person name="Li D."/>
            <person name="Liu D."/>
            <person name="Zhang X."/>
            <person name="Ji Z."/>
            <person name="Zhao W."/>
            <person name="Sun Y."/>
            <person name="Zhang Z."/>
            <person name="Bao J."/>
            <person name="Han Y."/>
            <person name="Dong L."/>
            <person name="Ji J."/>
            <person name="Chen P."/>
            <person name="Wu S."/>
            <person name="Liu J."/>
            <person name="Xiao Y."/>
            <person name="Bu D."/>
            <person name="Tan J."/>
            <person name="Yang L."/>
            <person name="Ye C."/>
            <person name="Zhang J."/>
            <person name="Xu J."/>
            <person name="Zhou Y."/>
            <person name="Yu Y."/>
            <person name="Zhang B."/>
            <person name="Zhuang S."/>
            <person name="Wei H."/>
            <person name="Liu B."/>
            <person name="Lei M."/>
            <person name="Yu H."/>
            <person name="Li Y."/>
            <person name="Xu H."/>
            <person name="Wei S."/>
            <person name="He X."/>
            <person name="Fang L."/>
            <person name="Zhang Z."/>
            <person name="Zhang Y."/>
            <person name="Huang X."/>
            <person name="Su Z."/>
            <person name="Tong W."/>
            <person name="Li J."/>
            <person name="Tong Z."/>
            <person name="Li S."/>
            <person name="Ye J."/>
            <person name="Wang L."/>
            <person name="Fang L."/>
            <person name="Lei T."/>
            <person name="Chen C.-S."/>
            <person name="Chen H.-C."/>
            <person name="Xu Z."/>
            <person name="Li H."/>
            <person name="Huang H."/>
            <person name="Zhang F."/>
            <person name="Xu H."/>
            <person name="Li N."/>
            <person name="Zhao C."/>
            <person name="Li S."/>
            <person name="Dong L."/>
            <person name="Huang Y."/>
            <person name="Li L."/>
            <person name="Xi Y."/>
            <person name="Qi Q."/>
            <person name="Li W."/>
            <person name="Zhang B."/>
            <person name="Hu W."/>
            <person name="Zhang Y."/>
            <person name="Tian X."/>
            <person name="Jiao Y."/>
            <person name="Liang X."/>
            <person name="Jin J."/>
            <person name="Gao L."/>
            <person name="Zheng W."/>
            <person name="Hao B."/>
            <person name="Liu S.-M."/>
            <person name="Wang W."/>
            <person name="Yuan L."/>
            <person name="Cao M."/>
            <person name="McDermott J."/>
            <person name="Samudrala R."/>
            <person name="Wang J."/>
            <person name="Wong G.K.-S."/>
            <person name="Yang H."/>
        </authorList>
    </citation>
    <scope>NUCLEOTIDE SEQUENCE [LARGE SCALE GENOMIC DNA]</scope>
    <source>
        <strain>cv. 93-11</strain>
    </source>
</reference>
<reference key="2">
    <citation type="journal article" date="2007" name="Plant Mol. Biol.">
        <title>A collection of 10,096 indica rice full-length cDNAs reveals highly expressed sequence divergence between Oryza sativa indica and japonica subspecies.</title>
        <authorList>
            <person name="Liu X."/>
            <person name="Lu T."/>
            <person name="Yu S."/>
            <person name="Li Y."/>
            <person name="Huang Y."/>
            <person name="Huang T."/>
            <person name="Zhang L."/>
            <person name="Zhu J."/>
            <person name="Zhao Q."/>
            <person name="Fan D."/>
            <person name="Mu J."/>
            <person name="Shangguan Y."/>
            <person name="Feng Q."/>
            <person name="Guan J."/>
            <person name="Ying K."/>
            <person name="Zhang Y."/>
            <person name="Lin Z."/>
            <person name="Sun Z."/>
            <person name="Qian Q."/>
            <person name="Lu Y."/>
            <person name="Han B."/>
        </authorList>
    </citation>
    <scope>NUCLEOTIDE SEQUENCE [LARGE SCALE MRNA]</scope>
    <source>
        <strain>cv. Guang-Lu-Ai No.4</strain>
    </source>
</reference>
<reference key="3">
    <citation type="journal article" date="2014" name="Plant Physiol.">
        <title>Functional and evolutionary analysis of the CASPARIAN STRIP MEMBRANE DOMAIN PROTEIN family.</title>
        <authorList>
            <person name="Roppolo D."/>
            <person name="Boeckmann B."/>
            <person name="Pfister A."/>
            <person name="Boutet E."/>
            <person name="Rubio M.C."/>
            <person name="Denervaud-Tendon V."/>
            <person name="Vermeer J.E."/>
            <person name="Gheyselinck J."/>
            <person name="Xenarios I."/>
            <person name="Geldner N."/>
        </authorList>
    </citation>
    <scope>GENE FAMILY</scope>
    <scope>NOMENCLATURE</scope>
</reference>